<name>RS9_ECOLC</name>
<feature type="chain" id="PRO_1000081817" description="Small ribosomal subunit protein uS9">
    <location>
        <begin position="1"/>
        <end position="130"/>
    </location>
</feature>
<protein>
    <recommendedName>
        <fullName evidence="1">Small ribosomal subunit protein uS9</fullName>
    </recommendedName>
    <alternativeName>
        <fullName evidence="2">30S ribosomal protein S9</fullName>
    </alternativeName>
</protein>
<proteinExistence type="inferred from homology"/>
<evidence type="ECO:0000255" key="1">
    <source>
        <dbReference type="HAMAP-Rule" id="MF_00532"/>
    </source>
</evidence>
<evidence type="ECO:0000305" key="2"/>
<gene>
    <name evidence="1" type="primary">rpsI</name>
    <name type="ordered locus">EcolC_0476</name>
</gene>
<sequence>MAENQYYGTGRRKSSAARVFIKPGNGKIVINQRSLEQYFGRETARMVVRQPLELVDMVEKLDLYITVKGGGISGQAGAIRHGITRALMEYDESLRSELRKAGFVTRDARQVERKKVGLRKARRRPQFSKR</sequence>
<organism>
    <name type="scientific">Escherichia coli (strain ATCC 8739 / DSM 1576 / NBRC 3972 / NCIMB 8545 / WDCM 00012 / Crooks)</name>
    <dbReference type="NCBI Taxonomy" id="481805"/>
    <lineage>
        <taxon>Bacteria</taxon>
        <taxon>Pseudomonadati</taxon>
        <taxon>Pseudomonadota</taxon>
        <taxon>Gammaproteobacteria</taxon>
        <taxon>Enterobacterales</taxon>
        <taxon>Enterobacteriaceae</taxon>
        <taxon>Escherichia</taxon>
    </lineage>
</organism>
<reference key="1">
    <citation type="submission" date="2008-02" db="EMBL/GenBank/DDBJ databases">
        <title>Complete sequence of Escherichia coli C str. ATCC 8739.</title>
        <authorList>
            <person name="Copeland A."/>
            <person name="Lucas S."/>
            <person name="Lapidus A."/>
            <person name="Glavina del Rio T."/>
            <person name="Dalin E."/>
            <person name="Tice H."/>
            <person name="Bruce D."/>
            <person name="Goodwin L."/>
            <person name="Pitluck S."/>
            <person name="Kiss H."/>
            <person name="Brettin T."/>
            <person name="Detter J.C."/>
            <person name="Han C."/>
            <person name="Kuske C.R."/>
            <person name="Schmutz J."/>
            <person name="Larimer F."/>
            <person name="Land M."/>
            <person name="Hauser L."/>
            <person name="Kyrpides N."/>
            <person name="Mikhailova N."/>
            <person name="Ingram L."/>
            <person name="Richardson P."/>
        </authorList>
    </citation>
    <scope>NUCLEOTIDE SEQUENCE [LARGE SCALE GENOMIC DNA]</scope>
    <source>
        <strain>ATCC 8739 / DSM 1576 / NBRC 3972 / NCIMB 8545 / WDCM 00012 / Crooks</strain>
    </source>
</reference>
<accession>B1IQP9</accession>
<keyword id="KW-0687">Ribonucleoprotein</keyword>
<keyword id="KW-0689">Ribosomal protein</keyword>
<dbReference type="EMBL" id="CP000946">
    <property type="protein sequence ID" value="ACA76153.1"/>
    <property type="molecule type" value="Genomic_DNA"/>
</dbReference>
<dbReference type="RefSeq" id="WP_000829818.1">
    <property type="nucleotide sequence ID" value="NZ_MTFT01000027.1"/>
</dbReference>
<dbReference type="SMR" id="B1IQP9"/>
<dbReference type="GeneID" id="98390344"/>
<dbReference type="KEGG" id="ecl:EcolC_0476"/>
<dbReference type="HOGENOM" id="CLU_046483_2_1_6"/>
<dbReference type="GO" id="GO:0022627">
    <property type="term" value="C:cytosolic small ribosomal subunit"/>
    <property type="evidence" value="ECO:0007669"/>
    <property type="project" value="TreeGrafter"/>
</dbReference>
<dbReference type="GO" id="GO:0003723">
    <property type="term" value="F:RNA binding"/>
    <property type="evidence" value="ECO:0007669"/>
    <property type="project" value="TreeGrafter"/>
</dbReference>
<dbReference type="GO" id="GO:0003735">
    <property type="term" value="F:structural constituent of ribosome"/>
    <property type="evidence" value="ECO:0007669"/>
    <property type="project" value="InterPro"/>
</dbReference>
<dbReference type="GO" id="GO:0006412">
    <property type="term" value="P:translation"/>
    <property type="evidence" value="ECO:0007669"/>
    <property type="project" value="UniProtKB-UniRule"/>
</dbReference>
<dbReference type="FunFam" id="3.30.230.10:FF:000001">
    <property type="entry name" value="30S ribosomal protein S9"/>
    <property type="match status" value="1"/>
</dbReference>
<dbReference type="Gene3D" id="3.30.230.10">
    <property type="match status" value="1"/>
</dbReference>
<dbReference type="HAMAP" id="MF_00532_B">
    <property type="entry name" value="Ribosomal_uS9_B"/>
    <property type="match status" value="1"/>
</dbReference>
<dbReference type="InterPro" id="IPR020568">
    <property type="entry name" value="Ribosomal_Su5_D2-typ_SF"/>
</dbReference>
<dbReference type="InterPro" id="IPR000754">
    <property type="entry name" value="Ribosomal_uS9"/>
</dbReference>
<dbReference type="InterPro" id="IPR023035">
    <property type="entry name" value="Ribosomal_uS9_bac/plastid"/>
</dbReference>
<dbReference type="InterPro" id="IPR020574">
    <property type="entry name" value="Ribosomal_uS9_CS"/>
</dbReference>
<dbReference type="InterPro" id="IPR014721">
    <property type="entry name" value="Ribsml_uS5_D2-typ_fold_subgr"/>
</dbReference>
<dbReference type="NCBIfam" id="NF001099">
    <property type="entry name" value="PRK00132.1"/>
    <property type="match status" value="1"/>
</dbReference>
<dbReference type="PANTHER" id="PTHR21569">
    <property type="entry name" value="RIBOSOMAL PROTEIN S9"/>
    <property type="match status" value="1"/>
</dbReference>
<dbReference type="PANTHER" id="PTHR21569:SF1">
    <property type="entry name" value="SMALL RIBOSOMAL SUBUNIT PROTEIN US9M"/>
    <property type="match status" value="1"/>
</dbReference>
<dbReference type="Pfam" id="PF00380">
    <property type="entry name" value="Ribosomal_S9"/>
    <property type="match status" value="1"/>
</dbReference>
<dbReference type="SUPFAM" id="SSF54211">
    <property type="entry name" value="Ribosomal protein S5 domain 2-like"/>
    <property type="match status" value="1"/>
</dbReference>
<dbReference type="PROSITE" id="PS00360">
    <property type="entry name" value="RIBOSOMAL_S9"/>
    <property type="match status" value="1"/>
</dbReference>
<comment type="similarity">
    <text evidence="1">Belongs to the universal ribosomal protein uS9 family.</text>
</comment>